<keyword id="KW-0378">Hydrolase</keyword>
<accession>Q1J123</accession>
<reference key="1">
    <citation type="submission" date="2006-04" db="EMBL/GenBank/DDBJ databases">
        <title>Complete sequence of chromosome of Deinococcus geothermalis DSM 11300.</title>
        <authorList>
            <person name="Copeland A."/>
            <person name="Lucas S."/>
            <person name="Lapidus A."/>
            <person name="Barry K."/>
            <person name="Detter J.C."/>
            <person name="Glavina del Rio T."/>
            <person name="Hammon N."/>
            <person name="Israni S."/>
            <person name="Dalin E."/>
            <person name="Tice H."/>
            <person name="Pitluck S."/>
            <person name="Brettin T."/>
            <person name="Bruce D."/>
            <person name="Han C."/>
            <person name="Tapia R."/>
            <person name="Saunders E."/>
            <person name="Gilna P."/>
            <person name="Schmutz J."/>
            <person name="Larimer F."/>
            <person name="Land M."/>
            <person name="Hauser L."/>
            <person name="Kyrpides N."/>
            <person name="Kim E."/>
            <person name="Daly M.J."/>
            <person name="Fredrickson J.K."/>
            <person name="Makarova K.S."/>
            <person name="Gaidamakova E.K."/>
            <person name="Zhai M."/>
            <person name="Richardson P."/>
        </authorList>
    </citation>
    <scope>NUCLEOTIDE SEQUENCE [LARGE SCALE GENOMIC DNA]</scope>
    <source>
        <strain>DSM 11300 / CIP 105573 / AG-3a</strain>
    </source>
</reference>
<sequence length="87" mass="9773">MRLTALVSGTVQGVGYRRYVQRHARDLGLSGSAENLPDGRVEVVAEGPPEHLERLLHWLRRGPPHARVADVQTQYSEATGLRDFHVY</sequence>
<feature type="chain" id="PRO_0000326699" description="Acylphosphatase">
    <location>
        <begin position="1"/>
        <end position="87"/>
    </location>
</feature>
<feature type="domain" description="Acylphosphatase-like" evidence="1">
    <location>
        <begin position="2"/>
        <end position="87"/>
    </location>
</feature>
<feature type="active site" evidence="1">
    <location>
        <position position="17"/>
    </location>
</feature>
<feature type="active site" evidence="1">
    <location>
        <position position="35"/>
    </location>
</feature>
<proteinExistence type="inferred from homology"/>
<organism>
    <name type="scientific">Deinococcus geothermalis (strain DSM 11300 / CIP 105573 / AG-3a)</name>
    <dbReference type="NCBI Taxonomy" id="319795"/>
    <lineage>
        <taxon>Bacteria</taxon>
        <taxon>Thermotogati</taxon>
        <taxon>Deinococcota</taxon>
        <taxon>Deinococci</taxon>
        <taxon>Deinococcales</taxon>
        <taxon>Deinococcaceae</taxon>
        <taxon>Deinococcus</taxon>
    </lineage>
</organism>
<comment type="catalytic activity">
    <reaction>
        <text>an acyl phosphate + H2O = a carboxylate + phosphate + H(+)</text>
        <dbReference type="Rhea" id="RHEA:14965"/>
        <dbReference type="ChEBI" id="CHEBI:15377"/>
        <dbReference type="ChEBI" id="CHEBI:15378"/>
        <dbReference type="ChEBI" id="CHEBI:29067"/>
        <dbReference type="ChEBI" id="CHEBI:43474"/>
        <dbReference type="ChEBI" id="CHEBI:59918"/>
        <dbReference type="EC" id="3.6.1.7"/>
    </reaction>
</comment>
<comment type="similarity">
    <text evidence="2">Belongs to the acylphosphatase family.</text>
</comment>
<evidence type="ECO:0000255" key="1">
    <source>
        <dbReference type="PROSITE-ProRule" id="PRU00520"/>
    </source>
</evidence>
<evidence type="ECO:0000305" key="2"/>
<name>ACYP_DEIGD</name>
<protein>
    <recommendedName>
        <fullName>Acylphosphatase</fullName>
        <ecNumber>3.6.1.7</ecNumber>
    </recommendedName>
    <alternativeName>
        <fullName>Acylphosphate phosphohydrolase</fullName>
    </alternativeName>
</protein>
<dbReference type="EC" id="3.6.1.7"/>
<dbReference type="EMBL" id="CP000359">
    <property type="protein sequence ID" value="ABF44811.1"/>
    <property type="molecule type" value="Genomic_DNA"/>
</dbReference>
<dbReference type="RefSeq" id="WP_011529653.1">
    <property type="nucleotide sequence ID" value="NC_008025.1"/>
</dbReference>
<dbReference type="SMR" id="Q1J123"/>
<dbReference type="STRING" id="319795.Dgeo_0509"/>
<dbReference type="KEGG" id="dge:Dgeo_0509"/>
<dbReference type="eggNOG" id="COG1254">
    <property type="taxonomic scope" value="Bacteria"/>
</dbReference>
<dbReference type="HOGENOM" id="CLU_141932_1_0_0"/>
<dbReference type="Proteomes" id="UP000002431">
    <property type="component" value="Chromosome"/>
</dbReference>
<dbReference type="GO" id="GO:0003998">
    <property type="term" value="F:acylphosphatase activity"/>
    <property type="evidence" value="ECO:0007669"/>
    <property type="project" value="UniProtKB-EC"/>
</dbReference>
<dbReference type="Gene3D" id="3.30.70.100">
    <property type="match status" value="1"/>
</dbReference>
<dbReference type="InterPro" id="IPR020456">
    <property type="entry name" value="Acylphosphatase"/>
</dbReference>
<dbReference type="InterPro" id="IPR001792">
    <property type="entry name" value="Acylphosphatase-like_dom"/>
</dbReference>
<dbReference type="InterPro" id="IPR036046">
    <property type="entry name" value="Acylphosphatase-like_dom_sf"/>
</dbReference>
<dbReference type="NCBIfam" id="NF011007">
    <property type="entry name" value="PRK14433.1"/>
    <property type="match status" value="1"/>
</dbReference>
<dbReference type="PANTHER" id="PTHR47268">
    <property type="entry name" value="ACYLPHOSPHATASE"/>
    <property type="match status" value="1"/>
</dbReference>
<dbReference type="PANTHER" id="PTHR47268:SF4">
    <property type="entry name" value="ACYLPHOSPHATASE"/>
    <property type="match status" value="1"/>
</dbReference>
<dbReference type="Pfam" id="PF00708">
    <property type="entry name" value="Acylphosphatase"/>
    <property type="match status" value="1"/>
</dbReference>
<dbReference type="SUPFAM" id="SSF54975">
    <property type="entry name" value="Acylphosphatase/BLUF domain-like"/>
    <property type="match status" value="1"/>
</dbReference>
<dbReference type="PROSITE" id="PS51160">
    <property type="entry name" value="ACYLPHOSPHATASE_3"/>
    <property type="match status" value="1"/>
</dbReference>
<gene>
    <name type="primary">acyP</name>
    <name type="ordered locus">Dgeo_0509</name>
</gene>